<comment type="function">
    <text>Regulation of processes involving cell contact and adhesion such as growth control, tumor invasion, and metastasis. Negative regulator of EGFR signaling pathway. Forms complexes with beta-catenin and gamma-catenin/plakoglobin. Beta-catenin may be a substrate for the catalytic activity of PTPRK/PTP-kappa.</text>
</comment>
<comment type="catalytic activity">
    <reaction evidence="7">
        <text>O-phospho-L-tyrosyl-[protein] + H2O = L-tyrosyl-[protein] + phosphate</text>
        <dbReference type="Rhea" id="RHEA:10684"/>
        <dbReference type="Rhea" id="RHEA-COMP:10136"/>
        <dbReference type="Rhea" id="RHEA-COMP:20101"/>
        <dbReference type="ChEBI" id="CHEBI:15377"/>
        <dbReference type="ChEBI" id="CHEBI:43474"/>
        <dbReference type="ChEBI" id="CHEBI:46858"/>
        <dbReference type="ChEBI" id="CHEBI:61978"/>
        <dbReference type="EC" id="3.1.3.48"/>
    </reaction>
</comment>
<comment type="subcellular location">
    <subcellularLocation>
        <location>Membrane</location>
        <topology>Single-pass type I membrane protein</topology>
    </subcellularLocation>
</comment>
<comment type="tissue specificity">
    <text>High levels in liver and kidney. Lower levels in lung, brain and heart. Not seen in spleen and testis.</text>
</comment>
<comment type="developmental stage">
    <text>Developmentally regulated with highest expression found in developing areas or in areas capable of developmental plasticity.</text>
</comment>
<comment type="PTM">
    <text>This protein undergoes proteolytic processing.</text>
</comment>
<comment type="similarity">
    <text evidence="9">Belongs to the protein-tyrosine phosphatase family. Receptor class 2B subfamily.</text>
</comment>
<name>PTPRK_MOUSE</name>
<gene>
    <name type="primary">Ptprk</name>
    <name type="synonym">Ptpk</name>
</gene>
<protein>
    <recommendedName>
        <fullName>Receptor-type tyrosine-protein phosphatase kappa</fullName>
        <shortName>Protein-tyrosine phosphatase kappa</shortName>
        <shortName>R-PTP-kappa</shortName>
        <ecNumber>3.1.3.48</ecNumber>
    </recommendedName>
</protein>
<evidence type="ECO:0000250" key="1"/>
<evidence type="ECO:0000255" key="2"/>
<evidence type="ECO:0000255" key="3">
    <source>
        <dbReference type="PROSITE-ProRule" id="PRU00114"/>
    </source>
</evidence>
<evidence type="ECO:0000255" key="4">
    <source>
        <dbReference type="PROSITE-ProRule" id="PRU00128"/>
    </source>
</evidence>
<evidence type="ECO:0000255" key="5">
    <source>
        <dbReference type="PROSITE-ProRule" id="PRU00160"/>
    </source>
</evidence>
<evidence type="ECO:0000255" key="6">
    <source>
        <dbReference type="PROSITE-ProRule" id="PRU00316"/>
    </source>
</evidence>
<evidence type="ECO:0000255" key="7">
    <source>
        <dbReference type="PROSITE-ProRule" id="PRU10044"/>
    </source>
</evidence>
<evidence type="ECO:0000269" key="8">
    <source>
    </source>
</evidence>
<evidence type="ECO:0000305" key="9"/>
<evidence type="ECO:0007744" key="10">
    <source>
    </source>
</evidence>
<sequence>MDVAAAALPAFVALWLLYPWPLLGSALGQFSAGGCTFDDGPGACDYHQDLYDDFEWVHVSAQEPHYLPPEMPQGSYMVVDSSNHDPGEKARLQLPTMKENDTHCIDFSYLLYSQKGLNPGTLNILVRVNKGPLANPIWNVTGFTGRDWLRAELAVSTFWPNEYQVIFEAEVSGGRSGYIAIDDIQVLSYPCDKSPHFLRLGDVEVNAGQNATFQCIATGRDAVHNKLWLQRRNGEDIPVAQTKNINHRRFAASFRLQEVTKTDQDLYRCVTQSERGSGVSNFAQLIVREPPRPIAPPQLLGVGPTYLLIQLNANSIIGDGPIILKEVEYRMTSGSWTETHAVNAPTYKLWHLDPDTEYEIRVLLTRPGEGGTGLPGPPLITRTKCAEPMRTPKTLKIAEIQARRIAVDWESLGYNITRCHTFNVTICYHYFRGHNESRADCLDMDPKAPQHVVNHLPPYTNVSLKMILTNPEGRKESEETIIQTDEDVPGPVPVKSLQGTSFENKIFLNWKEPLEPNGIITQYEVSYSSIRSFDPAVPVAGPPQTVSNLWNSTHHVFMHLHPGTTYQFFIRASTVKGFGPATAINVTTNISAPSLPDYEGVDASLNETATTITVLLRPAQAKGAPISAYQIVVEQLHPHRTKREAGAMECYQVPVTYQNALSGGAPYYFAAELPPGNLPEPAPFTVGDNRTYKGFWNPPLAPRKGYNIYFQAMSSVEKETKTQCVRIATKAAATEEPEVIPDPAKQTDRVVKIAGISAGILVFILLLLVVIVIVKKSKLAKKRKDAMGNTRQEMTHMVNAMDRSYADQSTLHAEDPLSLTFMDQHNFSPRLPNDPLVPTAVLDENHSATAESSRLLDVPRYLCEGTESPYQTGQLHPAIRVADLLQHINLMKTSDSYGFKEEYESFFEGQSASWDVAKKDQNRAKNRYGNIIAYDHSRVILQPVEDDPSSDYINANYIDIWLYRDGYQRPSHYIATQGPVHETVYDFWRMVWQEQSACIVMVTNLVEVGRVKCYKYWPDDTEVYGDFKVTCVEMEPLAEYVVRTFTLERRGYNEIREVKQFHFTGWPDHGVPYHATGLLSFIRRVKLSNPPSAGPIVVHCSAGAGRTGCYIVIDIMLDMAEREGVVDIYNCVKALRSRRINMVQTEEQYIFIHDAILEACLCGETAIPVCEFKAAYFDMIRIDSQTNSSHLKDEFQTLNSVTPRLQAEDCSIACLPRNHDKNRFMDMLPPDRCLPFLITIDGESSNYINAALMDSYRQPAAFIVTQYPLPNTVKDFWRLVYDYGCTSIVMLNEVDLSQGCPQYWPEEGMLRYGPIQVECMSCSMDCDVINRIFRICNLTRPQEGYLMVQQFQYLGWASHREVPGSKRSFLKLILQVEKWQEECEEGEGRTIIHCLNGGGRSGMFCAIGIVVEMVKRQNVVDVFHAVKTLRNSKPNMVEAPEQYRFCYDVALEYLESS</sequence>
<accession>P35822</accession>
<organism>
    <name type="scientific">Mus musculus</name>
    <name type="common">Mouse</name>
    <dbReference type="NCBI Taxonomy" id="10090"/>
    <lineage>
        <taxon>Eukaryota</taxon>
        <taxon>Metazoa</taxon>
        <taxon>Chordata</taxon>
        <taxon>Craniata</taxon>
        <taxon>Vertebrata</taxon>
        <taxon>Euteleostomi</taxon>
        <taxon>Mammalia</taxon>
        <taxon>Eutheria</taxon>
        <taxon>Euarchontoglires</taxon>
        <taxon>Glires</taxon>
        <taxon>Rodentia</taxon>
        <taxon>Myomorpha</taxon>
        <taxon>Muroidea</taxon>
        <taxon>Muridae</taxon>
        <taxon>Murinae</taxon>
        <taxon>Mus</taxon>
        <taxon>Mus</taxon>
    </lineage>
</organism>
<dbReference type="EC" id="3.1.3.48"/>
<dbReference type="EMBL" id="L10106">
    <property type="protein sequence ID" value="AAA40021.1"/>
    <property type="molecule type" value="mRNA"/>
</dbReference>
<dbReference type="CCDS" id="CCDS35874.1"/>
<dbReference type="PIR" id="A48066">
    <property type="entry name" value="A48066"/>
</dbReference>
<dbReference type="RefSeq" id="NP_033009.1">
    <property type="nucleotide sequence ID" value="NM_008983.3"/>
</dbReference>
<dbReference type="SMR" id="P35822"/>
<dbReference type="BioGRID" id="202500">
    <property type="interactions" value="11"/>
</dbReference>
<dbReference type="FunCoup" id="P35822">
    <property type="interactions" value="697"/>
</dbReference>
<dbReference type="IntAct" id="P35822">
    <property type="interactions" value="1"/>
</dbReference>
<dbReference type="MINT" id="P35822"/>
<dbReference type="STRING" id="10090.ENSMUSP00000126279"/>
<dbReference type="GlyConnect" id="2671">
    <property type="glycosylation" value="4 N-Linked glycans (2 sites)"/>
</dbReference>
<dbReference type="GlyCosmos" id="P35822">
    <property type="glycosylation" value="12 sites, 4 glycans"/>
</dbReference>
<dbReference type="GlyGen" id="P35822">
    <property type="glycosylation" value="15 sites, 12 N-linked glycans (7 sites)"/>
</dbReference>
<dbReference type="iPTMnet" id="P35822"/>
<dbReference type="PhosphoSitePlus" id="P35822"/>
<dbReference type="PaxDb" id="10090-ENSMUSP00000126279"/>
<dbReference type="ProteomicsDB" id="301946"/>
<dbReference type="Pumba" id="P35822"/>
<dbReference type="Antibodypedia" id="32782">
    <property type="antibodies" value="54 antibodies from 21 providers"/>
</dbReference>
<dbReference type="DNASU" id="19272"/>
<dbReference type="Ensembl" id="ENSMUST00000166468.2">
    <property type="protein sequence ID" value="ENSMUSP00000126279.2"/>
    <property type="gene ID" value="ENSMUSG00000019889.11"/>
</dbReference>
<dbReference type="GeneID" id="19272"/>
<dbReference type="KEGG" id="mmu:19272"/>
<dbReference type="UCSC" id="uc007esk.1">
    <property type="organism name" value="mouse"/>
</dbReference>
<dbReference type="AGR" id="MGI:103310"/>
<dbReference type="CTD" id="5796"/>
<dbReference type="MGI" id="MGI:103310">
    <property type="gene designation" value="Ptprk"/>
</dbReference>
<dbReference type="VEuPathDB" id="HostDB:ENSMUSG00000019889"/>
<dbReference type="eggNOG" id="KOG4228">
    <property type="taxonomic scope" value="Eukaryota"/>
</dbReference>
<dbReference type="GeneTree" id="ENSGT00940000156249"/>
<dbReference type="HOGENOM" id="CLU_001645_0_2_1"/>
<dbReference type="InParanoid" id="P35822"/>
<dbReference type="OMA" id="RIATKXK"/>
<dbReference type="PhylomeDB" id="P35822"/>
<dbReference type="TreeFam" id="TF312900"/>
<dbReference type="Reactome" id="R-MMU-182971">
    <property type="pathway name" value="EGFR downregulation"/>
</dbReference>
<dbReference type="BioGRID-ORCS" id="19272">
    <property type="hits" value="3 hits in 80 CRISPR screens"/>
</dbReference>
<dbReference type="ChiTaRS" id="Ptprk">
    <property type="organism name" value="mouse"/>
</dbReference>
<dbReference type="PRO" id="PR:P35822"/>
<dbReference type="Proteomes" id="UP000000589">
    <property type="component" value="Chromosome 10"/>
</dbReference>
<dbReference type="RNAct" id="P35822">
    <property type="molecule type" value="protein"/>
</dbReference>
<dbReference type="Bgee" id="ENSMUSG00000019889">
    <property type="expression patterns" value="Expressed in embryonic post-anal tail and 299 other cell types or tissues"/>
</dbReference>
<dbReference type="ExpressionAtlas" id="P35822">
    <property type="expression patterns" value="baseline and differential"/>
</dbReference>
<dbReference type="GO" id="GO:0030424">
    <property type="term" value="C:axon"/>
    <property type="evidence" value="ECO:0000314"/>
    <property type="project" value="MGI"/>
</dbReference>
<dbReference type="GO" id="GO:0030425">
    <property type="term" value="C:dendrite"/>
    <property type="evidence" value="ECO:0000314"/>
    <property type="project" value="MGI"/>
</dbReference>
<dbReference type="GO" id="GO:0016020">
    <property type="term" value="C:membrane"/>
    <property type="evidence" value="ECO:0007669"/>
    <property type="project" value="UniProtKB-SubCell"/>
</dbReference>
<dbReference type="GO" id="GO:0043025">
    <property type="term" value="C:neuronal cell body"/>
    <property type="evidence" value="ECO:0000314"/>
    <property type="project" value="MGI"/>
</dbReference>
<dbReference type="GO" id="GO:0001750">
    <property type="term" value="C:photoreceptor outer segment"/>
    <property type="evidence" value="ECO:0000314"/>
    <property type="project" value="MGI"/>
</dbReference>
<dbReference type="GO" id="GO:0004725">
    <property type="term" value="F:protein tyrosine phosphatase activity"/>
    <property type="evidence" value="ECO:0000314"/>
    <property type="project" value="MGI"/>
</dbReference>
<dbReference type="CDD" id="cd00063">
    <property type="entry name" value="FN3"/>
    <property type="match status" value="2"/>
</dbReference>
<dbReference type="CDD" id="cd06263">
    <property type="entry name" value="MAM"/>
    <property type="match status" value="1"/>
</dbReference>
<dbReference type="CDD" id="cd14636">
    <property type="entry name" value="R-PTPc-K-2"/>
    <property type="match status" value="1"/>
</dbReference>
<dbReference type="FunFam" id="3.90.190.10:FF:000003">
    <property type="entry name" value="receptor-type tyrosine-protein phosphatase kappa isoform X1"/>
    <property type="match status" value="1"/>
</dbReference>
<dbReference type="FunFam" id="3.90.190.10:FF:000005">
    <property type="entry name" value="receptor-type tyrosine-protein phosphatase kappa isoform X1"/>
    <property type="match status" value="1"/>
</dbReference>
<dbReference type="FunFam" id="2.60.40.10:FF:000019">
    <property type="entry name" value="receptor-type tyrosine-protein phosphatase kappa isoform X2"/>
    <property type="match status" value="1"/>
</dbReference>
<dbReference type="FunFam" id="2.60.120.200:FF:000006">
    <property type="entry name" value="receptor-type tyrosine-protein phosphatase T isoform X1"/>
    <property type="match status" value="1"/>
</dbReference>
<dbReference type="FunFam" id="2.60.40.10:FF:000009">
    <property type="entry name" value="receptor-type tyrosine-protein phosphatase U isoform X1"/>
    <property type="match status" value="1"/>
</dbReference>
<dbReference type="FunFam" id="2.60.40.10:FF:000048">
    <property type="entry name" value="receptor-type tyrosine-protein phosphatase U isoform X1"/>
    <property type="match status" value="1"/>
</dbReference>
<dbReference type="FunFam" id="2.60.40.10:FF:000025">
    <property type="entry name" value="receptor-type tyrosine-protein phosphatase U isoform X2"/>
    <property type="match status" value="1"/>
</dbReference>
<dbReference type="Gene3D" id="2.60.120.200">
    <property type="match status" value="1"/>
</dbReference>
<dbReference type="Gene3D" id="2.60.40.10">
    <property type="entry name" value="Immunoglobulins"/>
    <property type="match status" value="4"/>
</dbReference>
<dbReference type="Gene3D" id="3.90.190.10">
    <property type="entry name" value="Protein tyrosine phosphatase superfamily"/>
    <property type="match status" value="2"/>
</dbReference>
<dbReference type="InterPro" id="IPR013320">
    <property type="entry name" value="ConA-like_dom_sf"/>
</dbReference>
<dbReference type="InterPro" id="IPR003961">
    <property type="entry name" value="FN3_dom"/>
</dbReference>
<dbReference type="InterPro" id="IPR036116">
    <property type="entry name" value="FN3_sf"/>
</dbReference>
<dbReference type="InterPro" id="IPR007110">
    <property type="entry name" value="Ig-like_dom"/>
</dbReference>
<dbReference type="InterPro" id="IPR036179">
    <property type="entry name" value="Ig-like_dom_sf"/>
</dbReference>
<dbReference type="InterPro" id="IPR013783">
    <property type="entry name" value="Ig-like_fold"/>
</dbReference>
<dbReference type="InterPro" id="IPR013098">
    <property type="entry name" value="Ig_I-set"/>
</dbReference>
<dbReference type="InterPro" id="IPR003599">
    <property type="entry name" value="Ig_sub"/>
</dbReference>
<dbReference type="InterPro" id="IPR000998">
    <property type="entry name" value="MAM_dom"/>
</dbReference>
<dbReference type="InterPro" id="IPR029021">
    <property type="entry name" value="Prot-tyrosine_phosphatase-like"/>
</dbReference>
<dbReference type="InterPro" id="IPR000242">
    <property type="entry name" value="PTP_cat"/>
</dbReference>
<dbReference type="InterPro" id="IPR051622">
    <property type="entry name" value="R-tyr_protein_phosphatases"/>
</dbReference>
<dbReference type="InterPro" id="IPR016130">
    <property type="entry name" value="Tyr_Pase_AS"/>
</dbReference>
<dbReference type="InterPro" id="IPR003595">
    <property type="entry name" value="Tyr_Pase_cat"/>
</dbReference>
<dbReference type="InterPro" id="IPR000387">
    <property type="entry name" value="Tyr_Pase_dom"/>
</dbReference>
<dbReference type="PANTHER" id="PTHR24051:SF8">
    <property type="entry name" value="PROTEIN-TYROSINE-PHOSPHATASE"/>
    <property type="match status" value="1"/>
</dbReference>
<dbReference type="PANTHER" id="PTHR24051">
    <property type="entry name" value="SUSHI DOMAIN-CONTAINING PROTEIN 1"/>
    <property type="match status" value="1"/>
</dbReference>
<dbReference type="Pfam" id="PF00041">
    <property type="entry name" value="fn3"/>
    <property type="match status" value="1"/>
</dbReference>
<dbReference type="Pfam" id="PF23144">
    <property type="entry name" value="Fn3_PTPRU"/>
    <property type="match status" value="1"/>
</dbReference>
<dbReference type="Pfam" id="PF07679">
    <property type="entry name" value="I-set"/>
    <property type="match status" value="1"/>
</dbReference>
<dbReference type="Pfam" id="PF00629">
    <property type="entry name" value="MAM"/>
    <property type="match status" value="1"/>
</dbReference>
<dbReference type="Pfam" id="PF00102">
    <property type="entry name" value="Y_phosphatase"/>
    <property type="match status" value="2"/>
</dbReference>
<dbReference type="PRINTS" id="PR00020">
    <property type="entry name" value="MAMDOMAIN"/>
</dbReference>
<dbReference type="PRINTS" id="PR00700">
    <property type="entry name" value="PRTYPHPHTASE"/>
</dbReference>
<dbReference type="SMART" id="SM00060">
    <property type="entry name" value="FN3"/>
    <property type="match status" value="3"/>
</dbReference>
<dbReference type="SMART" id="SM00409">
    <property type="entry name" value="IG"/>
    <property type="match status" value="1"/>
</dbReference>
<dbReference type="SMART" id="SM00137">
    <property type="entry name" value="MAM"/>
    <property type="match status" value="1"/>
</dbReference>
<dbReference type="SMART" id="SM00194">
    <property type="entry name" value="PTPc"/>
    <property type="match status" value="2"/>
</dbReference>
<dbReference type="SMART" id="SM00404">
    <property type="entry name" value="PTPc_motif"/>
    <property type="match status" value="2"/>
</dbReference>
<dbReference type="SUPFAM" id="SSF52799">
    <property type="entry name" value="(Phosphotyrosine protein) phosphatases II"/>
    <property type="match status" value="2"/>
</dbReference>
<dbReference type="SUPFAM" id="SSF49899">
    <property type="entry name" value="Concanavalin A-like lectins/glucanases"/>
    <property type="match status" value="1"/>
</dbReference>
<dbReference type="SUPFAM" id="SSF49265">
    <property type="entry name" value="Fibronectin type III"/>
    <property type="match status" value="2"/>
</dbReference>
<dbReference type="SUPFAM" id="SSF48726">
    <property type="entry name" value="Immunoglobulin"/>
    <property type="match status" value="1"/>
</dbReference>
<dbReference type="PROSITE" id="PS50853">
    <property type="entry name" value="FN3"/>
    <property type="match status" value="3"/>
</dbReference>
<dbReference type="PROSITE" id="PS50835">
    <property type="entry name" value="IG_LIKE"/>
    <property type="match status" value="1"/>
</dbReference>
<dbReference type="PROSITE" id="PS00740">
    <property type="entry name" value="MAM_1"/>
    <property type="match status" value="1"/>
</dbReference>
<dbReference type="PROSITE" id="PS50060">
    <property type="entry name" value="MAM_2"/>
    <property type="match status" value="1"/>
</dbReference>
<dbReference type="PROSITE" id="PS00383">
    <property type="entry name" value="TYR_PHOSPHATASE_1"/>
    <property type="match status" value="2"/>
</dbReference>
<dbReference type="PROSITE" id="PS50056">
    <property type="entry name" value="TYR_PHOSPHATASE_2"/>
    <property type="match status" value="2"/>
</dbReference>
<dbReference type="PROSITE" id="PS50055">
    <property type="entry name" value="TYR_PHOSPHATASE_PTP"/>
    <property type="match status" value="2"/>
</dbReference>
<feature type="signal peptide" evidence="2">
    <location>
        <begin position="1"/>
        <end position="25"/>
    </location>
</feature>
<feature type="chain" id="PRO_0000025447" description="Receptor-type tyrosine-protein phosphatase kappa">
    <location>
        <begin position="26"/>
        <end position="1457"/>
    </location>
</feature>
<feature type="topological domain" description="Extracellular" evidence="2">
    <location>
        <begin position="26"/>
        <end position="752"/>
    </location>
</feature>
<feature type="transmembrane region" description="Helical" evidence="2">
    <location>
        <begin position="753"/>
        <end position="774"/>
    </location>
</feature>
<feature type="topological domain" description="Cytoplasmic" evidence="2">
    <location>
        <begin position="775"/>
        <end position="1457"/>
    </location>
</feature>
<feature type="domain" description="MAM" evidence="4">
    <location>
        <begin position="30"/>
        <end position="193"/>
    </location>
</feature>
<feature type="domain" description="Ig-like C2-type">
    <location>
        <begin position="195"/>
        <end position="280"/>
    </location>
</feature>
<feature type="domain" description="Fibronectin type-III 1" evidence="6">
    <location>
        <begin position="293"/>
        <end position="388"/>
    </location>
</feature>
<feature type="domain" description="Fibronectin type-III 2" evidence="6">
    <location>
        <begin position="391"/>
        <end position="487"/>
    </location>
</feature>
<feature type="domain" description="Fibronectin type-III 3" evidence="6">
    <location>
        <begin position="490"/>
        <end position="594"/>
    </location>
</feature>
<feature type="domain" description="Fibronectin type-III 4" evidence="6">
    <location>
        <begin position="595"/>
        <end position="688"/>
    </location>
</feature>
<feature type="domain" description="Tyrosine-protein phosphatase 1" evidence="5">
    <location>
        <begin position="899"/>
        <end position="1159"/>
    </location>
</feature>
<feature type="domain" description="Tyrosine-protein phosphatase 2" evidence="5">
    <location>
        <begin position="1191"/>
        <end position="1453"/>
    </location>
</feature>
<feature type="active site" description="Phosphocysteine intermediate" evidence="1">
    <location>
        <position position="1100"/>
    </location>
</feature>
<feature type="active site" description="Phosphocysteine intermediate" evidence="1">
    <location>
        <position position="1394"/>
    </location>
</feature>
<feature type="binding site" evidence="1">
    <location>
        <position position="1068"/>
    </location>
    <ligand>
        <name>substrate</name>
    </ligand>
</feature>
<feature type="binding site" evidence="1">
    <location>
        <begin position="1100"/>
        <end position="1106"/>
    </location>
    <ligand>
        <name>substrate</name>
    </ligand>
</feature>
<feature type="binding site" evidence="1">
    <location>
        <position position="1144"/>
    </location>
    <ligand>
        <name>substrate</name>
    </ligand>
</feature>
<feature type="modified residue" description="Phosphoserine" evidence="10">
    <location>
        <position position="868"/>
    </location>
</feature>
<feature type="glycosylation site" description="N-linked (GlcNAc...) asparagine" evidence="2">
    <location>
        <position position="100"/>
    </location>
</feature>
<feature type="glycosylation site" description="N-linked (GlcNAc...) asparagine" evidence="8">
    <location>
        <position position="139"/>
    </location>
</feature>
<feature type="glycosylation site" description="N-linked (GlcNAc...) asparagine" evidence="2">
    <location>
        <position position="210"/>
    </location>
</feature>
<feature type="glycosylation site" description="N-linked (GlcNAc...) asparagine" evidence="8">
    <location>
        <position position="415"/>
    </location>
</feature>
<feature type="glycosylation site" description="N-linked (GlcNAc...) asparagine" evidence="2">
    <location>
        <position position="423"/>
    </location>
</feature>
<feature type="glycosylation site" description="N-linked (GlcNAc...) asparagine" evidence="2">
    <location>
        <position position="435"/>
    </location>
</feature>
<feature type="glycosylation site" description="N-linked (GlcNAc...) asparagine" evidence="8">
    <location>
        <position position="461"/>
    </location>
</feature>
<feature type="glycosylation site" description="N-linked (GlcNAc...) asparagine" evidence="2">
    <location>
        <position position="551"/>
    </location>
</feature>
<feature type="glycosylation site" description="N-linked (GlcNAc...) asparagine" evidence="2">
    <location>
        <position position="585"/>
    </location>
</feature>
<feature type="glycosylation site" description="N-linked (GlcNAc...) asparagine" evidence="2">
    <location>
        <position position="589"/>
    </location>
</feature>
<feature type="glycosylation site" description="N-linked (GlcNAc...) asparagine" evidence="2">
    <location>
        <position position="606"/>
    </location>
</feature>
<feature type="glycosylation site" description="N-linked (GlcNAc...) asparagine" evidence="2">
    <location>
        <position position="689"/>
    </location>
</feature>
<feature type="disulfide bond" evidence="3">
    <location>
        <begin position="215"/>
        <end position="269"/>
    </location>
</feature>
<proteinExistence type="evidence at protein level"/>
<reference key="1">
    <citation type="journal article" date="1993" name="Mol. Cell. Biol.">
        <title>Cloning and characterization of R-PTP-kappa, a new member of the receptor protein tyrosine phosphatase family with a proteolytically cleaved cellular adhesion molecule-like extracellular region.</title>
        <authorList>
            <person name="Jiang Y.P."/>
            <person name="Wang H."/>
            <person name="D'Eustachio P."/>
            <person name="Musacchio J.M."/>
            <person name="Schlessinger J."/>
            <person name="Sap J."/>
        </authorList>
    </citation>
    <scope>NUCLEOTIDE SEQUENCE [MRNA]</scope>
    <source>
        <strain>RI</strain>
        <tissue>Brain</tissue>
    </source>
</reference>
<reference key="2">
    <citation type="journal article" date="2009" name="Nat. Biotechnol.">
        <title>Mass-spectrometric identification and relative quantification of N-linked cell surface glycoproteins.</title>
        <authorList>
            <person name="Wollscheid B."/>
            <person name="Bausch-Fluck D."/>
            <person name="Henderson C."/>
            <person name="O'Brien R."/>
            <person name="Bibel M."/>
            <person name="Schiess R."/>
            <person name="Aebersold R."/>
            <person name="Watts J.D."/>
        </authorList>
    </citation>
    <scope>GLYCOSYLATION [LARGE SCALE ANALYSIS] AT ASN-139; ASN-415 AND ASN-461</scope>
</reference>
<reference key="3">
    <citation type="journal article" date="2010" name="Cell">
        <title>A tissue-specific atlas of mouse protein phosphorylation and expression.</title>
        <authorList>
            <person name="Huttlin E.L."/>
            <person name="Jedrychowski M.P."/>
            <person name="Elias J.E."/>
            <person name="Goswami T."/>
            <person name="Rad R."/>
            <person name="Beausoleil S.A."/>
            <person name="Villen J."/>
            <person name="Haas W."/>
            <person name="Sowa M.E."/>
            <person name="Gygi S.P."/>
        </authorList>
    </citation>
    <scope>PHOSPHORYLATION [LARGE SCALE ANALYSIS] AT SER-868</scope>
    <scope>IDENTIFICATION BY MASS SPECTROMETRY [LARGE SCALE ANALYSIS]</scope>
    <source>
        <tissue>Kidney</tissue>
    </source>
</reference>
<keyword id="KW-1015">Disulfide bond</keyword>
<keyword id="KW-0325">Glycoprotein</keyword>
<keyword id="KW-0378">Hydrolase</keyword>
<keyword id="KW-0393">Immunoglobulin domain</keyword>
<keyword id="KW-0472">Membrane</keyword>
<keyword id="KW-0597">Phosphoprotein</keyword>
<keyword id="KW-0904">Protein phosphatase</keyword>
<keyword id="KW-0675">Receptor</keyword>
<keyword id="KW-1185">Reference proteome</keyword>
<keyword id="KW-0677">Repeat</keyword>
<keyword id="KW-0732">Signal</keyword>
<keyword id="KW-0812">Transmembrane</keyword>
<keyword id="KW-1133">Transmembrane helix</keyword>